<feature type="chain" id="PRO_0000065954" description="Putative colanic acid biosynthesis glycosyl transferase WcaC">
    <location>
        <begin position="1"/>
        <end position="405"/>
    </location>
</feature>
<feature type="sequence conflict" description="In Ref. 2; AAC77838." evidence="1" ref="2">
    <original>L</original>
    <variation>F</variation>
    <location>
        <position position="232"/>
    </location>
</feature>
<reference key="1">
    <citation type="journal article" date="1996" name="J. Bacteriol.">
        <title>Organization of the Escherichia coli K-12 gene cluster responsible for production of the extracellular polysaccharide colanic acid.</title>
        <authorList>
            <person name="Stevenson G."/>
            <person name="Andrianopoulos K."/>
            <person name="Hobbs M."/>
            <person name="Reeves P.R."/>
        </authorList>
    </citation>
    <scope>NUCLEOTIDE SEQUENCE [GENOMIC DNA]</scope>
    <source>
        <strain>K12</strain>
    </source>
</reference>
<reference key="2">
    <citation type="submission" date="1998-04" db="EMBL/GenBank/DDBJ databases">
        <authorList>
            <person name="Reeves P.R."/>
        </authorList>
    </citation>
    <scope>SEQUENCE REVISION TO 9-54</scope>
    <source>
        <strain>K12</strain>
    </source>
</reference>
<reference key="3">
    <citation type="journal article" date="1997" name="Science">
        <title>The complete genome sequence of Escherichia coli K-12.</title>
        <authorList>
            <person name="Blattner F.R."/>
            <person name="Plunkett G. III"/>
            <person name="Bloch C.A."/>
            <person name="Perna N.T."/>
            <person name="Burland V."/>
            <person name="Riley M."/>
            <person name="Collado-Vides J."/>
            <person name="Glasner J.D."/>
            <person name="Rode C.K."/>
            <person name="Mayhew G.F."/>
            <person name="Gregor J."/>
            <person name="Davis N.W."/>
            <person name="Kirkpatrick H.A."/>
            <person name="Goeden M.A."/>
            <person name="Rose D.J."/>
            <person name="Mau B."/>
            <person name="Shao Y."/>
        </authorList>
    </citation>
    <scope>NUCLEOTIDE SEQUENCE [LARGE SCALE GENOMIC DNA]</scope>
    <source>
        <strain>K12 / MG1655 / ATCC 47076</strain>
    </source>
</reference>
<reference key="4">
    <citation type="journal article" date="2006" name="Mol. Syst. Biol.">
        <title>Highly accurate genome sequences of Escherichia coli K-12 strains MG1655 and W3110.</title>
        <authorList>
            <person name="Hayashi K."/>
            <person name="Morooka N."/>
            <person name="Yamamoto Y."/>
            <person name="Fujita K."/>
            <person name="Isono K."/>
            <person name="Choi S."/>
            <person name="Ohtsubo E."/>
            <person name="Baba T."/>
            <person name="Wanner B.L."/>
            <person name="Mori H."/>
            <person name="Horiuchi T."/>
        </authorList>
    </citation>
    <scope>NUCLEOTIDE SEQUENCE [LARGE SCALE GENOMIC DNA]</scope>
    <source>
        <strain>K12 / W3110 / ATCC 27325 / DSM 5911</strain>
    </source>
</reference>
<comment type="pathway">
    <text>Slime biogenesis; slime polysaccharide biosynthesis.</text>
</comment>
<protein>
    <recommendedName>
        <fullName>Putative colanic acid biosynthesis glycosyl transferase WcaC</fullName>
    </recommendedName>
</protein>
<evidence type="ECO:0000305" key="1"/>
<name>WCAC_ECOLI</name>
<proteinExistence type="predicted"/>
<accession>P71237</accession>
<accession>P76386</accession>
<accession>Q2MAY2</accession>
<keyword id="KW-0448">Lipopolysaccharide biosynthesis</keyword>
<keyword id="KW-1185">Reference proteome</keyword>
<keyword id="KW-0808">Transferase</keyword>
<organism>
    <name type="scientific">Escherichia coli (strain K12)</name>
    <dbReference type="NCBI Taxonomy" id="83333"/>
    <lineage>
        <taxon>Bacteria</taxon>
        <taxon>Pseudomonadati</taxon>
        <taxon>Pseudomonadota</taxon>
        <taxon>Gammaproteobacteria</taxon>
        <taxon>Enterobacterales</taxon>
        <taxon>Enterobacteriaceae</taxon>
        <taxon>Escherichia</taxon>
    </lineage>
</organism>
<sequence>MNILQFNVRLAEGGAAGVALDLHQRALQQGLASHFVYGYGKGGKESVSHQNYPQVIKHTPRMTAMANIALFRLFNRDLFGNFNELYRTITRTAGPVVLHFHVLHSYWLNLKSVVRFCEKVKNHKPDVTLVWTLHDHWSVTGRCAFTDGCEGWKTGCQKCPTLNNYPPVKIDRAHQLVAGKRQLFREMLALGCQFISPSQHVADAFNSLYGPGRCRIINNGIDMATEAILADLPPVRETQGKPKIAVVAHDLRYDGKTNQQLVREMMALGDKIELHTFGKFSPFTAGNVVNHGFETDKRKLMSALNQMDALVFSSRVDNYPLILCEALSIGVPVIATHSDAAREVLQKSGGKTVSEEEVLQLVQLSKPEIAQAIFGTTLAEFSQRSRAAYSGQQMLEEYVNFYQNL</sequence>
<gene>
    <name type="primary">wcaC</name>
    <name type="ordered locus">b2057</name>
    <name type="ordered locus">JW2042</name>
</gene>
<dbReference type="EMBL" id="U38473">
    <property type="protein sequence ID" value="AAC77838.1"/>
    <property type="molecule type" value="Genomic_DNA"/>
</dbReference>
<dbReference type="EMBL" id="U00096">
    <property type="protein sequence ID" value="AAC75118.1"/>
    <property type="molecule type" value="Genomic_DNA"/>
</dbReference>
<dbReference type="EMBL" id="AP009048">
    <property type="protein sequence ID" value="BAE76574.1"/>
    <property type="molecule type" value="Genomic_DNA"/>
</dbReference>
<dbReference type="PIR" id="H64971">
    <property type="entry name" value="H64971"/>
</dbReference>
<dbReference type="RefSeq" id="NP_416561.1">
    <property type="nucleotide sequence ID" value="NC_000913.3"/>
</dbReference>
<dbReference type="RefSeq" id="WP_001023871.1">
    <property type="nucleotide sequence ID" value="NZ_LN832404.1"/>
</dbReference>
<dbReference type="BioGRID" id="4260675">
    <property type="interactions" value="297"/>
</dbReference>
<dbReference type="BioGRID" id="850926">
    <property type="interactions" value="1"/>
</dbReference>
<dbReference type="DIP" id="DIP-11119N"/>
<dbReference type="FunCoup" id="P71237">
    <property type="interactions" value="39"/>
</dbReference>
<dbReference type="IntAct" id="P71237">
    <property type="interactions" value="6"/>
</dbReference>
<dbReference type="STRING" id="511145.b2057"/>
<dbReference type="CAZy" id="GT4">
    <property type="family name" value="Glycosyltransferase Family 4"/>
</dbReference>
<dbReference type="PaxDb" id="511145-b2057"/>
<dbReference type="EnsemblBacteria" id="AAC75118">
    <property type="protein sequence ID" value="AAC75118"/>
    <property type="gene ID" value="b2057"/>
</dbReference>
<dbReference type="GeneID" id="946579"/>
<dbReference type="KEGG" id="ecj:JW2042"/>
<dbReference type="KEGG" id="eco:b2057"/>
<dbReference type="KEGG" id="ecoc:C3026_11575"/>
<dbReference type="PATRIC" id="fig|1411691.4.peg.194"/>
<dbReference type="EchoBASE" id="EB3341"/>
<dbReference type="eggNOG" id="COG0438">
    <property type="taxonomic scope" value="Bacteria"/>
</dbReference>
<dbReference type="HOGENOM" id="CLU_009583_28_0_6"/>
<dbReference type="InParanoid" id="P71237"/>
<dbReference type="OMA" id="KPIVWTL"/>
<dbReference type="OrthoDB" id="9768685at2"/>
<dbReference type="PhylomeDB" id="P71237"/>
<dbReference type="BioCyc" id="EcoCyc:G7102-MONOMER"/>
<dbReference type="BioCyc" id="MetaCyc:G7102-MONOMER"/>
<dbReference type="UniPathway" id="UPA00936"/>
<dbReference type="PRO" id="PR:P71237"/>
<dbReference type="Proteomes" id="UP000000625">
    <property type="component" value="Chromosome"/>
</dbReference>
<dbReference type="GO" id="GO:0035250">
    <property type="term" value="F:UDP-galactosyltransferase activity"/>
    <property type="evidence" value="ECO:0000314"/>
    <property type="project" value="EcoCyc"/>
</dbReference>
<dbReference type="GO" id="GO:0009242">
    <property type="term" value="P:colanic acid biosynthetic process"/>
    <property type="evidence" value="ECO:0000317"/>
    <property type="project" value="EcoCyc"/>
</dbReference>
<dbReference type="GO" id="GO:0009103">
    <property type="term" value="P:lipopolysaccharide biosynthetic process"/>
    <property type="evidence" value="ECO:0007669"/>
    <property type="project" value="UniProtKB-KW"/>
</dbReference>
<dbReference type="GO" id="GO:0045228">
    <property type="term" value="P:slime layer polysaccharide biosynthetic process"/>
    <property type="evidence" value="ECO:0007669"/>
    <property type="project" value="UniProtKB-UniPathway"/>
</dbReference>
<dbReference type="CDD" id="cd03825">
    <property type="entry name" value="GT4_WcaC-like"/>
    <property type="match status" value="1"/>
</dbReference>
<dbReference type="Gene3D" id="3.40.50.2000">
    <property type="entry name" value="Glycogen Phosphorylase B"/>
    <property type="match status" value="2"/>
</dbReference>
<dbReference type="InterPro" id="IPR023916">
    <property type="entry name" value="Colanic_acid_synth_WcaC"/>
</dbReference>
<dbReference type="InterPro" id="IPR028098">
    <property type="entry name" value="Glyco_trans_4-like_N"/>
</dbReference>
<dbReference type="NCBIfam" id="TIGR04015">
    <property type="entry name" value="WcaC"/>
    <property type="match status" value="1"/>
</dbReference>
<dbReference type="PANTHER" id="PTHR12526:SF632">
    <property type="entry name" value="COLANIC ACID BIOSYNTHESIS GLYCOSYL TRANSFERASE WCAC-RELATED"/>
    <property type="match status" value="1"/>
</dbReference>
<dbReference type="PANTHER" id="PTHR12526">
    <property type="entry name" value="GLYCOSYLTRANSFERASE"/>
    <property type="match status" value="1"/>
</dbReference>
<dbReference type="Pfam" id="PF13692">
    <property type="entry name" value="Glyco_trans_1_4"/>
    <property type="match status" value="1"/>
</dbReference>
<dbReference type="Pfam" id="PF13439">
    <property type="entry name" value="Glyco_transf_4"/>
    <property type="match status" value="1"/>
</dbReference>
<dbReference type="SUPFAM" id="SSF53756">
    <property type="entry name" value="UDP-Glycosyltransferase/glycogen phosphorylase"/>
    <property type="match status" value="1"/>
</dbReference>